<evidence type="ECO:0000256" key="1">
    <source>
        <dbReference type="SAM" id="MobiDB-lite"/>
    </source>
</evidence>
<evidence type="ECO:0000269" key="2">
    <source>
    </source>
</evidence>
<evidence type="ECO:0000269" key="3">
    <source>
    </source>
</evidence>
<evidence type="ECO:0000269" key="4">
    <source>
    </source>
</evidence>
<reference key="1">
    <citation type="journal article" date="2005" name="Science">
        <title>The transcriptional landscape of the mammalian genome.</title>
        <authorList>
            <person name="Carninci P."/>
            <person name="Kasukawa T."/>
            <person name="Katayama S."/>
            <person name="Gough J."/>
            <person name="Frith M.C."/>
            <person name="Maeda N."/>
            <person name="Oyama R."/>
            <person name="Ravasi T."/>
            <person name="Lenhard B."/>
            <person name="Wells C."/>
            <person name="Kodzius R."/>
            <person name="Shimokawa K."/>
            <person name="Bajic V.B."/>
            <person name="Brenner S.E."/>
            <person name="Batalov S."/>
            <person name="Forrest A.R."/>
            <person name="Zavolan M."/>
            <person name="Davis M.J."/>
            <person name="Wilming L.G."/>
            <person name="Aidinis V."/>
            <person name="Allen J.E."/>
            <person name="Ambesi-Impiombato A."/>
            <person name="Apweiler R."/>
            <person name="Aturaliya R.N."/>
            <person name="Bailey T.L."/>
            <person name="Bansal M."/>
            <person name="Baxter L."/>
            <person name="Beisel K.W."/>
            <person name="Bersano T."/>
            <person name="Bono H."/>
            <person name="Chalk A.M."/>
            <person name="Chiu K.P."/>
            <person name="Choudhary V."/>
            <person name="Christoffels A."/>
            <person name="Clutterbuck D.R."/>
            <person name="Crowe M.L."/>
            <person name="Dalla E."/>
            <person name="Dalrymple B.P."/>
            <person name="de Bono B."/>
            <person name="Della Gatta G."/>
            <person name="di Bernardo D."/>
            <person name="Down T."/>
            <person name="Engstrom P."/>
            <person name="Fagiolini M."/>
            <person name="Faulkner G."/>
            <person name="Fletcher C.F."/>
            <person name="Fukushima T."/>
            <person name="Furuno M."/>
            <person name="Futaki S."/>
            <person name="Gariboldi M."/>
            <person name="Georgii-Hemming P."/>
            <person name="Gingeras T.R."/>
            <person name="Gojobori T."/>
            <person name="Green R.E."/>
            <person name="Gustincich S."/>
            <person name="Harbers M."/>
            <person name="Hayashi Y."/>
            <person name="Hensch T.K."/>
            <person name="Hirokawa N."/>
            <person name="Hill D."/>
            <person name="Huminiecki L."/>
            <person name="Iacono M."/>
            <person name="Ikeo K."/>
            <person name="Iwama A."/>
            <person name="Ishikawa T."/>
            <person name="Jakt M."/>
            <person name="Kanapin A."/>
            <person name="Katoh M."/>
            <person name="Kawasawa Y."/>
            <person name="Kelso J."/>
            <person name="Kitamura H."/>
            <person name="Kitano H."/>
            <person name="Kollias G."/>
            <person name="Krishnan S.P."/>
            <person name="Kruger A."/>
            <person name="Kummerfeld S.K."/>
            <person name="Kurochkin I.V."/>
            <person name="Lareau L.F."/>
            <person name="Lazarevic D."/>
            <person name="Lipovich L."/>
            <person name="Liu J."/>
            <person name="Liuni S."/>
            <person name="McWilliam S."/>
            <person name="Madan Babu M."/>
            <person name="Madera M."/>
            <person name="Marchionni L."/>
            <person name="Matsuda H."/>
            <person name="Matsuzawa S."/>
            <person name="Miki H."/>
            <person name="Mignone F."/>
            <person name="Miyake S."/>
            <person name="Morris K."/>
            <person name="Mottagui-Tabar S."/>
            <person name="Mulder N."/>
            <person name="Nakano N."/>
            <person name="Nakauchi H."/>
            <person name="Ng P."/>
            <person name="Nilsson R."/>
            <person name="Nishiguchi S."/>
            <person name="Nishikawa S."/>
            <person name="Nori F."/>
            <person name="Ohara O."/>
            <person name="Okazaki Y."/>
            <person name="Orlando V."/>
            <person name="Pang K.C."/>
            <person name="Pavan W.J."/>
            <person name="Pavesi G."/>
            <person name="Pesole G."/>
            <person name="Petrovsky N."/>
            <person name="Piazza S."/>
            <person name="Reed J."/>
            <person name="Reid J.F."/>
            <person name="Ring B.Z."/>
            <person name="Ringwald M."/>
            <person name="Rost B."/>
            <person name="Ruan Y."/>
            <person name="Salzberg S.L."/>
            <person name="Sandelin A."/>
            <person name="Schneider C."/>
            <person name="Schoenbach C."/>
            <person name="Sekiguchi K."/>
            <person name="Semple C.A."/>
            <person name="Seno S."/>
            <person name="Sessa L."/>
            <person name="Sheng Y."/>
            <person name="Shibata Y."/>
            <person name="Shimada H."/>
            <person name="Shimada K."/>
            <person name="Silva D."/>
            <person name="Sinclair B."/>
            <person name="Sperling S."/>
            <person name="Stupka E."/>
            <person name="Sugiura K."/>
            <person name="Sultana R."/>
            <person name="Takenaka Y."/>
            <person name="Taki K."/>
            <person name="Tammoja K."/>
            <person name="Tan S.L."/>
            <person name="Tang S."/>
            <person name="Taylor M.S."/>
            <person name="Tegner J."/>
            <person name="Teichmann S.A."/>
            <person name="Ueda H.R."/>
            <person name="van Nimwegen E."/>
            <person name="Verardo R."/>
            <person name="Wei C.L."/>
            <person name="Yagi K."/>
            <person name="Yamanishi H."/>
            <person name="Zabarovsky E."/>
            <person name="Zhu S."/>
            <person name="Zimmer A."/>
            <person name="Hide W."/>
            <person name="Bult C."/>
            <person name="Grimmond S.M."/>
            <person name="Teasdale R.D."/>
            <person name="Liu E.T."/>
            <person name="Brusic V."/>
            <person name="Quackenbush J."/>
            <person name="Wahlestedt C."/>
            <person name="Mattick J.S."/>
            <person name="Hume D.A."/>
            <person name="Kai C."/>
            <person name="Sasaki D."/>
            <person name="Tomaru Y."/>
            <person name="Fukuda S."/>
            <person name="Kanamori-Katayama M."/>
            <person name="Suzuki M."/>
            <person name="Aoki J."/>
            <person name="Arakawa T."/>
            <person name="Iida J."/>
            <person name="Imamura K."/>
            <person name="Itoh M."/>
            <person name="Kato T."/>
            <person name="Kawaji H."/>
            <person name="Kawagashira N."/>
            <person name="Kawashima T."/>
            <person name="Kojima M."/>
            <person name="Kondo S."/>
            <person name="Konno H."/>
            <person name="Nakano K."/>
            <person name="Ninomiya N."/>
            <person name="Nishio T."/>
            <person name="Okada M."/>
            <person name="Plessy C."/>
            <person name="Shibata K."/>
            <person name="Shiraki T."/>
            <person name="Suzuki S."/>
            <person name="Tagami M."/>
            <person name="Waki K."/>
            <person name="Watahiki A."/>
            <person name="Okamura-Oho Y."/>
            <person name="Suzuki H."/>
            <person name="Kawai J."/>
            <person name="Hayashizaki Y."/>
        </authorList>
    </citation>
    <scope>NUCLEOTIDE SEQUENCE [LARGE SCALE MRNA]</scope>
    <source>
        <strain>C57BL/6J</strain>
        <tissue>Testis</tissue>
    </source>
</reference>
<reference key="2">
    <citation type="journal article" date="2010" name="Cell">
        <title>A tissue-specific atlas of mouse protein phosphorylation and expression.</title>
        <authorList>
            <person name="Huttlin E.L."/>
            <person name="Jedrychowski M.P."/>
            <person name="Elias J.E."/>
            <person name="Goswami T."/>
            <person name="Rad R."/>
            <person name="Beausoleil S.A."/>
            <person name="Villen J."/>
            <person name="Haas W."/>
            <person name="Sowa M.E."/>
            <person name="Gygi S.P."/>
        </authorList>
    </citation>
    <scope>IDENTIFICATION BY MASS SPECTROMETRY [LARGE SCALE ANALYSIS]</scope>
    <source>
        <tissue>Testis</tissue>
    </source>
</reference>
<reference key="3">
    <citation type="journal article" date="2017" name="PLoS ONE">
        <title>Expression of uncharacterized male germ cell-specific genes and discovery of novel sperm-tail proteins in mice.</title>
        <authorList>
            <person name="Kwon J.T."/>
            <person name="Ham S."/>
            <person name="Jeon S."/>
            <person name="Kim Y."/>
            <person name="Oh S."/>
            <person name="Cho C."/>
        </authorList>
    </citation>
    <scope>TISSUE SPECIFICITY</scope>
    <scope>DEVELOPMENTAL STAGE</scope>
</reference>
<reference key="4">
    <citation type="journal article" date="2020" name="PeerJ">
        <title>Spermatogenesis is normal in Tex33 knockout mice.</title>
        <authorList>
            <person name="Zhu Z."/>
            <person name="Zhang X."/>
            <person name="Zeng W."/>
            <person name="Zhao S."/>
            <person name="Zhou J."/>
            <person name="Zhou Z."/>
            <person name="Liu M."/>
        </authorList>
    </citation>
    <scope>FUNCTION</scope>
    <scope>DISRUPTION PHENOTYPE</scope>
</reference>
<reference key="5">
    <citation type="journal article" date="2021" name="Mol. Med. Report.">
        <title>Testis-expressed protein 33 is not essential for spermiogenesis and fertility in mice.</title>
        <authorList>
            <person name="Xia M."/>
            <person name="Xia J."/>
            <person name="Niu C."/>
            <person name="Zhong Y."/>
            <person name="Ge T."/>
            <person name="Ding Y."/>
            <person name="Zheng Y."/>
        </authorList>
    </citation>
    <scope>TISSUE SPECIFICITY</scope>
    <scope>DEVELOPMENTAL STAGE</scope>
    <scope>SUBCELLULAR LOCATION</scope>
    <scope>DISRUPTION PHENOTYPE</scope>
</reference>
<comment type="function">
    <text evidence="3 4">Seems to be associated with spermiogenesis but is not essential for sperm development and male fertility.</text>
</comment>
<comment type="subcellular location">
    <subcellularLocation>
        <location evidence="4">Cytoplasmic vesicle</location>
        <location evidence="4">Secretory vesicle</location>
        <location evidence="4">Acrosome</location>
    </subcellularLocation>
    <subcellularLocation>
        <location evidence="4">Cell projection</location>
        <location evidence="4">Cilium</location>
        <location evidence="4">Flagellum</location>
    </subcellularLocation>
</comment>
<comment type="tissue specificity">
    <text evidence="2 4">Only detected in testis, in the spermatids and sperm within the seminiferous tubules (at protein level).</text>
</comment>
<comment type="developmental stage">
    <text evidence="2 4">Initially expressed in the cytoplasm of round spermatids, expression diminishes in elongated spermatid (PubMed:28742876). Detected in testis at 28 days after birth and expression is maintained (PubMed:28742876, PubMed:33760102).</text>
</comment>
<comment type="disruption phenotype">
    <text evidence="3 4">Mutant adult male are fertile and there is no significant change on litter size compared with male wild-type adult. No differences are found in testis/body weight ratios, testicular/epididymal tissue morphology, sperm counts, sperm morphology and spermatozoa motility.</text>
</comment>
<organism>
    <name type="scientific">Mus musculus</name>
    <name type="common">Mouse</name>
    <dbReference type="NCBI Taxonomy" id="10090"/>
    <lineage>
        <taxon>Eukaryota</taxon>
        <taxon>Metazoa</taxon>
        <taxon>Chordata</taxon>
        <taxon>Craniata</taxon>
        <taxon>Vertebrata</taxon>
        <taxon>Euteleostomi</taxon>
        <taxon>Mammalia</taxon>
        <taxon>Eutheria</taxon>
        <taxon>Euarchontoglires</taxon>
        <taxon>Glires</taxon>
        <taxon>Rodentia</taxon>
        <taxon>Myomorpha</taxon>
        <taxon>Muroidea</taxon>
        <taxon>Muridae</taxon>
        <taxon>Murinae</taxon>
        <taxon>Mus</taxon>
        <taxon>Mus</taxon>
    </lineage>
</organism>
<protein>
    <recommendedName>
        <fullName>Ciliary microtubule inner protein 4</fullName>
    </recommendedName>
    <alternativeName>
        <fullName>Testis-expressed protein 33</fullName>
    </alternativeName>
</protein>
<feature type="chain" id="PRO_0000086903" description="Ciliary microtubule inner protein 4">
    <location>
        <begin position="1"/>
        <end position="266"/>
    </location>
</feature>
<feature type="region of interest" description="Disordered" evidence="1">
    <location>
        <begin position="1"/>
        <end position="124"/>
    </location>
</feature>
<feature type="compositionally biased region" description="Polar residues" evidence="1">
    <location>
        <begin position="1"/>
        <end position="15"/>
    </location>
</feature>
<feature type="compositionally biased region" description="Polar residues" evidence="1">
    <location>
        <begin position="24"/>
        <end position="38"/>
    </location>
</feature>
<feature type="compositionally biased region" description="Low complexity" evidence="1">
    <location>
        <begin position="47"/>
        <end position="63"/>
    </location>
</feature>
<feature type="compositionally biased region" description="Basic and acidic residues" evidence="1">
    <location>
        <begin position="81"/>
        <end position="102"/>
    </location>
</feature>
<sequence length="266" mass="30228">MELSHRQGTTTLTRTHPNDKEGQQDMNSFRANHSSLDNSKFKYHARLSQSPLGSSLGQGYLETPPLPPTPTCRTSLAMNSHPEDLKKGASRSSSRDARETFREGCVGEEGQDSRSPEQRTVPLSKKDSVIPENIRHKFGSKMVDQLISEDQARQAIGEMFEGQKRPSSWPSRTQSPMQASSIFSDYYDLGYHMRSNLFQGPPQETKSLMKASYTPEVIEKSVRDVEHWHGRKTDDLGRWHRKNAMNMNLQKALEEKYGEKSRSKAK</sequence>
<accession>Q9D9J2</accession>
<proteinExistence type="evidence at protein level"/>
<keyword id="KW-0966">Cell projection</keyword>
<keyword id="KW-0969">Cilium</keyword>
<keyword id="KW-0968">Cytoplasmic vesicle</keyword>
<keyword id="KW-0282">Flagellum</keyword>
<keyword id="KW-1185">Reference proteome</keyword>
<dbReference type="EMBL" id="AK006856">
    <property type="protein sequence ID" value="BAB24766.1"/>
    <property type="molecule type" value="mRNA"/>
</dbReference>
<dbReference type="CCDS" id="CCDS49665.1"/>
<dbReference type="RefSeq" id="NP_001157084.1">
    <property type="nucleotide sequence ID" value="NM_001163612.2"/>
</dbReference>
<dbReference type="RefSeq" id="NP_082798.1">
    <property type="nucleotide sequence ID" value="NM_028522.1"/>
</dbReference>
<dbReference type="SMR" id="Q9D9J2"/>
<dbReference type="FunCoup" id="Q9D9J2">
    <property type="interactions" value="4"/>
</dbReference>
<dbReference type="STRING" id="10090.ENSMUSP00000073984"/>
<dbReference type="GlyGen" id="Q9D9J2">
    <property type="glycosylation" value="1 site"/>
</dbReference>
<dbReference type="PhosphoSitePlus" id="Q9D9J2"/>
<dbReference type="PaxDb" id="10090-ENSMUSP00000073984"/>
<dbReference type="ProteomicsDB" id="262763"/>
<dbReference type="Antibodypedia" id="207">
    <property type="antibodies" value="64 antibodies from 16 providers"/>
</dbReference>
<dbReference type="Ensembl" id="ENSMUST00000074380.14">
    <property type="protein sequence ID" value="ENSMUSP00000073984.8"/>
    <property type="gene ID" value="ENSMUSG00000062154.15"/>
</dbReference>
<dbReference type="Ensembl" id="ENSMUST00000165170.8">
    <property type="protein sequence ID" value="ENSMUSP00000133264.2"/>
    <property type="gene ID" value="ENSMUSG00000062154.15"/>
</dbReference>
<dbReference type="GeneID" id="73376"/>
<dbReference type="KEGG" id="mmu:73376"/>
<dbReference type="UCSC" id="uc007wpb.2">
    <property type="organism name" value="mouse"/>
</dbReference>
<dbReference type="AGR" id="MGI:1920626"/>
<dbReference type="CTD" id="339669"/>
<dbReference type="MGI" id="MGI:1920626">
    <property type="gene designation" value="Cimip4"/>
</dbReference>
<dbReference type="VEuPathDB" id="HostDB:ENSMUSG00000062154"/>
<dbReference type="eggNOG" id="ENOG502S4AW">
    <property type="taxonomic scope" value="Eukaryota"/>
</dbReference>
<dbReference type="GeneTree" id="ENSGT00390000013198"/>
<dbReference type="InParanoid" id="Q9D9J2"/>
<dbReference type="OMA" id="DLDPWKT"/>
<dbReference type="OrthoDB" id="5977581at2759"/>
<dbReference type="PhylomeDB" id="Q9D9J2"/>
<dbReference type="TreeFam" id="TF335904"/>
<dbReference type="BioGRID-ORCS" id="73376">
    <property type="hits" value="1 hit in 76 CRISPR screens"/>
</dbReference>
<dbReference type="PRO" id="PR:Q9D9J2"/>
<dbReference type="Proteomes" id="UP000000589">
    <property type="component" value="Chromosome 15"/>
</dbReference>
<dbReference type="RNAct" id="Q9D9J2">
    <property type="molecule type" value="protein"/>
</dbReference>
<dbReference type="Bgee" id="ENSMUSG00000062154">
    <property type="expression patterns" value="Expressed in seminiferous tubule of testis and 37 other cell types or tissues"/>
</dbReference>
<dbReference type="ExpressionAtlas" id="Q9D9J2">
    <property type="expression patterns" value="baseline and differential"/>
</dbReference>
<dbReference type="GO" id="GO:0001669">
    <property type="term" value="C:acrosomal vesicle"/>
    <property type="evidence" value="ECO:0007669"/>
    <property type="project" value="UniProtKB-SubCell"/>
</dbReference>
<dbReference type="GO" id="GO:0036126">
    <property type="term" value="C:sperm flagellum"/>
    <property type="evidence" value="ECO:0000314"/>
    <property type="project" value="UniProtKB"/>
</dbReference>
<dbReference type="InterPro" id="IPR029234">
    <property type="entry name" value="CIMIP4"/>
</dbReference>
<dbReference type="PANTHER" id="PTHR31702">
    <property type="entry name" value="TESTIS-EXPRESSED PROTEIN 33"/>
    <property type="match status" value="1"/>
</dbReference>
<dbReference type="PANTHER" id="PTHR31702:SF2">
    <property type="entry name" value="TESTIS-EXPRESSED PROTEIN 33"/>
    <property type="match status" value="1"/>
</dbReference>
<dbReference type="Pfam" id="PF15400">
    <property type="entry name" value="TEX33"/>
    <property type="match status" value="1"/>
</dbReference>
<name>CMIP4_MOUSE</name>
<gene>
    <name type="primary">Cimip4</name>
    <name type="synonym">Ean57</name>
    <name type="synonym">Tex33</name>
</gene>